<organism>
    <name type="scientific">Ectopseudomonas mendocina (strain ymp)</name>
    <name type="common">Pseudomonas mendocina</name>
    <dbReference type="NCBI Taxonomy" id="399739"/>
    <lineage>
        <taxon>Bacteria</taxon>
        <taxon>Pseudomonadati</taxon>
        <taxon>Pseudomonadota</taxon>
        <taxon>Gammaproteobacteria</taxon>
        <taxon>Pseudomonadales</taxon>
        <taxon>Pseudomonadaceae</taxon>
        <taxon>Ectopseudomonas</taxon>
    </lineage>
</organism>
<accession>A4XTR1</accession>
<comment type="function">
    <text evidence="1">May be involved in the transport of PQQ or its precursor to the periplasm.</text>
</comment>
<comment type="pathway">
    <text evidence="1">Cofactor biosynthesis; pyrroloquinoline quinone biosynthesis.</text>
</comment>
<comment type="similarity">
    <text evidence="1">Belongs to the PqqB family.</text>
</comment>
<name>PQQB_ECTM1</name>
<protein>
    <recommendedName>
        <fullName evidence="1">Coenzyme PQQ synthesis protein B</fullName>
    </recommendedName>
    <alternativeName>
        <fullName evidence="1">Pyrroloquinoline quinone biosynthesis protein B</fullName>
    </alternativeName>
</protein>
<sequence>MQIQILGSAAGGGFPQWNCNCRNCRGVRAGTLRAQPRTQSSIAISDEGEQWILCNASPDIRAQIEAFPALQPARKLRDTAIAGIVLLDSQIDHCTGLLTLREGCPHQVWCTEMVHQDLTTGFPLFNMLSHWNGGLQHRLIELDAKPFSIPACPGLRINAIALRSSAPPYSPHRGNPHPGDNIGLFIEDLRTGGTLFYAPGLGQVDEQLLGWMRRADCLLVDGTLWRDDEMRVCEVGDKLGSEMGHLCQSGPGGMIELLDGLPTARKILIHINNTNPILDLDSPERAELDAHGIEVAFDGMSIVL</sequence>
<reference key="1">
    <citation type="submission" date="2007-04" db="EMBL/GenBank/DDBJ databases">
        <title>Complete sequence of Pseudomonas mendocina ymp.</title>
        <authorList>
            <consortium name="US DOE Joint Genome Institute"/>
            <person name="Copeland A."/>
            <person name="Lucas S."/>
            <person name="Lapidus A."/>
            <person name="Barry K."/>
            <person name="Glavina del Rio T."/>
            <person name="Dalin E."/>
            <person name="Tice H."/>
            <person name="Pitluck S."/>
            <person name="Kiss H."/>
            <person name="Brettin T."/>
            <person name="Detter J.C."/>
            <person name="Bruce D."/>
            <person name="Han C."/>
            <person name="Schmutz J."/>
            <person name="Larimer F."/>
            <person name="Land M."/>
            <person name="Hauser L."/>
            <person name="Kyrpides N."/>
            <person name="Mikhailova N."/>
            <person name="Hersman L."/>
            <person name="Dubois J."/>
            <person name="Maurice P."/>
            <person name="Richardson P."/>
        </authorList>
    </citation>
    <scope>NUCLEOTIDE SEQUENCE [LARGE SCALE GENOMIC DNA]</scope>
    <source>
        <strain>ymp</strain>
    </source>
</reference>
<feature type="chain" id="PRO_1000061655" description="Coenzyme PQQ synthesis protein B">
    <location>
        <begin position="1"/>
        <end position="304"/>
    </location>
</feature>
<proteinExistence type="inferred from homology"/>
<evidence type="ECO:0000255" key="1">
    <source>
        <dbReference type="HAMAP-Rule" id="MF_00653"/>
    </source>
</evidence>
<dbReference type="EMBL" id="CP000680">
    <property type="protein sequence ID" value="ABP84727.1"/>
    <property type="molecule type" value="Genomic_DNA"/>
</dbReference>
<dbReference type="SMR" id="A4XTR1"/>
<dbReference type="STRING" id="399739.Pmen_1966"/>
<dbReference type="KEGG" id="pmy:Pmen_1966"/>
<dbReference type="PATRIC" id="fig|399739.8.peg.1992"/>
<dbReference type="eggNOG" id="COG1235">
    <property type="taxonomic scope" value="Bacteria"/>
</dbReference>
<dbReference type="HOGENOM" id="CLU_061120_0_0_6"/>
<dbReference type="OrthoDB" id="9778305at2"/>
<dbReference type="UniPathway" id="UPA00539"/>
<dbReference type="GO" id="GO:0018189">
    <property type="term" value="P:pyrroloquinoline quinone biosynthetic process"/>
    <property type="evidence" value="ECO:0007669"/>
    <property type="project" value="UniProtKB-UniRule"/>
</dbReference>
<dbReference type="CDD" id="cd16274">
    <property type="entry name" value="PQQB-like_MBL-fold"/>
    <property type="match status" value="1"/>
</dbReference>
<dbReference type="Gene3D" id="3.60.15.10">
    <property type="entry name" value="Ribonuclease Z/Hydroxyacylglutathione hydrolase-like"/>
    <property type="match status" value="1"/>
</dbReference>
<dbReference type="HAMAP" id="MF_00653">
    <property type="entry name" value="PQQ_syn_PqqB"/>
    <property type="match status" value="1"/>
</dbReference>
<dbReference type="InterPro" id="IPR001279">
    <property type="entry name" value="Metallo-B-lactamas"/>
</dbReference>
<dbReference type="InterPro" id="IPR011842">
    <property type="entry name" value="PQQ_synth_PqqB"/>
</dbReference>
<dbReference type="InterPro" id="IPR036866">
    <property type="entry name" value="RibonucZ/Hydroxyglut_hydro"/>
</dbReference>
<dbReference type="NCBIfam" id="TIGR02108">
    <property type="entry name" value="PQQ_syn_pqqB"/>
    <property type="match status" value="1"/>
</dbReference>
<dbReference type="PANTHER" id="PTHR42663:SF7">
    <property type="entry name" value="COENZYME PQQ SYNTHESIS PROTEIN B"/>
    <property type="match status" value="1"/>
</dbReference>
<dbReference type="PANTHER" id="PTHR42663">
    <property type="entry name" value="HYDROLASE C777.06C-RELATED-RELATED"/>
    <property type="match status" value="1"/>
</dbReference>
<dbReference type="Pfam" id="PF12706">
    <property type="entry name" value="Lactamase_B_2"/>
    <property type="match status" value="1"/>
</dbReference>
<dbReference type="SUPFAM" id="SSF56281">
    <property type="entry name" value="Metallo-hydrolase/oxidoreductase"/>
    <property type="match status" value="1"/>
</dbReference>
<keyword id="KW-0884">PQQ biosynthesis</keyword>
<keyword id="KW-0813">Transport</keyword>
<gene>
    <name evidence="1" type="primary">pqqB</name>
    <name type="ordered locus">Pmen_1966</name>
</gene>